<accession>Q40523</accession>
<gene>
    <name type="primary">RAB11A</name>
</gene>
<proteinExistence type="evidence at transcript level"/>
<comment type="subcellular location">
    <subcellularLocation>
        <location evidence="4">Cell membrane</location>
        <topology evidence="4">Lipid-anchor</topology>
        <orientation evidence="4">Cytoplasmic side</orientation>
    </subcellularLocation>
</comment>
<comment type="similarity">
    <text evidence="4">Belongs to the small GTPase superfamily. Rab family.</text>
</comment>
<sequence>MANRVDHEYDYLFKMVLIGDSGVGKSNILSRFTRNEFCLESKSTIGVEFATRTLQVEGKTVKAQIWDTAGQERYRAITSAYYRGAVGALLFYDITKRQTFDNVQRWLRELRDHRDSNIVIILAGNKSDLKHLRAVSEQDDQALVKKEGLSFLETSALEALNVDKAFQTILTDIYHIISKKALAAQEAAASTALPGQGTTINVSDNSANVKRGCCST</sequence>
<organism>
    <name type="scientific">Nicotiana tabacum</name>
    <name type="common">Common tobacco</name>
    <dbReference type="NCBI Taxonomy" id="4097"/>
    <lineage>
        <taxon>Eukaryota</taxon>
        <taxon>Viridiplantae</taxon>
        <taxon>Streptophyta</taxon>
        <taxon>Embryophyta</taxon>
        <taxon>Tracheophyta</taxon>
        <taxon>Spermatophyta</taxon>
        <taxon>Magnoliopsida</taxon>
        <taxon>eudicotyledons</taxon>
        <taxon>Gunneridae</taxon>
        <taxon>Pentapetalae</taxon>
        <taxon>asterids</taxon>
        <taxon>lamiids</taxon>
        <taxon>Solanales</taxon>
        <taxon>Solanaceae</taxon>
        <taxon>Nicotianoideae</taxon>
        <taxon>Nicotianeae</taxon>
        <taxon>Nicotiana</taxon>
    </lineage>
</organism>
<reference key="1">
    <citation type="journal article" date="1995" name="Plant Physiol.">
        <title>Characterization of membrane-bound small GTP-binding proteins from Nicotiana tabacum.</title>
        <authorList>
            <person name="Haizel T."/>
            <person name="Merkle T."/>
            <person name="Turck F."/>
            <person name="Nagy F."/>
        </authorList>
    </citation>
    <scope>NUCLEOTIDE SEQUENCE [MRNA]</scope>
    <source>
        <strain>cv. SR1</strain>
    </source>
</reference>
<name>RB11A_TOBAC</name>
<keyword id="KW-1003">Cell membrane</keyword>
<keyword id="KW-0342">GTP-binding</keyword>
<keyword id="KW-0449">Lipoprotein</keyword>
<keyword id="KW-0472">Membrane</keyword>
<keyword id="KW-0547">Nucleotide-binding</keyword>
<keyword id="KW-0636">Prenylation</keyword>
<keyword id="KW-1185">Reference proteome</keyword>
<protein>
    <recommendedName>
        <fullName>Ras-related protein Rab11A</fullName>
    </recommendedName>
</protein>
<evidence type="ECO:0000250" key="1"/>
<evidence type="ECO:0000250" key="2">
    <source>
        <dbReference type="UniProtKB" id="P62491"/>
    </source>
</evidence>
<evidence type="ECO:0000255" key="3"/>
<evidence type="ECO:0000305" key="4"/>
<dbReference type="EMBL" id="L29271">
    <property type="protein sequence ID" value="AAA74115.1"/>
    <property type="molecule type" value="mRNA"/>
</dbReference>
<dbReference type="PIR" id="T03625">
    <property type="entry name" value="T03625"/>
</dbReference>
<dbReference type="RefSeq" id="NP_001313159.1">
    <property type="nucleotide sequence ID" value="NM_001326230.1"/>
</dbReference>
<dbReference type="SMR" id="Q40523"/>
<dbReference type="STRING" id="4097.Q40523"/>
<dbReference type="PaxDb" id="4097-Q40523"/>
<dbReference type="GeneID" id="107829726"/>
<dbReference type="KEGG" id="nta:107829726"/>
<dbReference type="OrthoDB" id="9989112at2759"/>
<dbReference type="Proteomes" id="UP000084051">
    <property type="component" value="Unplaced"/>
</dbReference>
<dbReference type="GO" id="GO:0005768">
    <property type="term" value="C:endosome"/>
    <property type="evidence" value="ECO:0000318"/>
    <property type="project" value="GO_Central"/>
</dbReference>
<dbReference type="GO" id="GO:0005794">
    <property type="term" value="C:Golgi apparatus"/>
    <property type="evidence" value="ECO:0000318"/>
    <property type="project" value="GO_Central"/>
</dbReference>
<dbReference type="GO" id="GO:0005886">
    <property type="term" value="C:plasma membrane"/>
    <property type="evidence" value="ECO:0007669"/>
    <property type="project" value="UniProtKB-SubCell"/>
</dbReference>
<dbReference type="GO" id="GO:0005525">
    <property type="term" value="F:GTP binding"/>
    <property type="evidence" value="ECO:0000318"/>
    <property type="project" value="GO_Central"/>
</dbReference>
<dbReference type="GO" id="GO:0003924">
    <property type="term" value="F:GTPase activity"/>
    <property type="evidence" value="ECO:0000318"/>
    <property type="project" value="GO_Central"/>
</dbReference>
<dbReference type="CDD" id="cd01868">
    <property type="entry name" value="Rab11_like"/>
    <property type="match status" value="1"/>
</dbReference>
<dbReference type="FunFam" id="3.40.50.300:FF:000067">
    <property type="entry name" value="ras-related protein RABA1f"/>
    <property type="match status" value="1"/>
</dbReference>
<dbReference type="Gene3D" id="3.40.50.300">
    <property type="entry name" value="P-loop containing nucleotide triphosphate hydrolases"/>
    <property type="match status" value="1"/>
</dbReference>
<dbReference type="InterPro" id="IPR027417">
    <property type="entry name" value="P-loop_NTPase"/>
</dbReference>
<dbReference type="InterPro" id="IPR050209">
    <property type="entry name" value="Rab_GTPases_membrane_traffic"/>
</dbReference>
<dbReference type="InterPro" id="IPR005225">
    <property type="entry name" value="Small_GTP-bd"/>
</dbReference>
<dbReference type="InterPro" id="IPR001806">
    <property type="entry name" value="Small_GTPase"/>
</dbReference>
<dbReference type="NCBIfam" id="TIGR00231">
    <property type="entry name" value="small_GTP"/>
    <property type="match status" value="1"/>
</dbReference>
<dbReference type="PANTHER" id="PTHR47979">
    <property type="entry name" value="DRAB11-RELATED"/>
    <property type="match status" value="1"/>
</dbReference>
<dbReference type="Pfam" id="PF00071">
    <property type="entry name" value="Ras"/>
    <property type="match status" value="1"/>
</dbReference>
<dbReference type="PRINTS" id="PR00449">
    <property type="entry name" value="RASTRNSFRMNG"/>
</dbReference>
<dbReference type="SMART" id="SM00175">
    <property type="entry name" value="RAB"/>
    <property type="match status" value="1"/>
</dbReference>
<dbReference type="SMART" id="SM00176">
    <property type="entry name" value="RAN"/>
    <property type="match status" value="1"/>
</dbReference>
<dbReference type="SMART" id="SM00173">
    <property type="entry name" value="RAS"/>
    <property type="match status" value="1"/>
</dbReference>
<dbReference type="SMART" id="SM00174">
    <property type="entry name" value="RHO"/>
    <property type="match status" value="1"/>
</dbReference>
<dbReference type="SUPFAM" id="SSF52540">
    <property type="entry name" value="P-loop containing nucleoside triphosphate hydrolases"/>
    <property type="match status" value="1"/>
</dbReference>
<dbReference type="PROSITE" id="PS51419">
    <property type="entry name" value="RAB"/>
    <property type="match status" value="1"/>
</dbReference>
<feature type="chain" id="PRO_0000121175" description="Ras-related protein Rab11A">
    <location>
        <begin position="1"/>
        <end position="216"/>
    </location>
</feature>
<feature type="short sequence motif" description="Effector region" evidence="3">
    <location>
        <begin position="41"/>
        <end position="49"/>
    </location>
</feature>
<feature type="binding site" evidence="2">
    <location>
        <begin position="19"/>
        <end position="27"/>
    </location>
    <ligand>
        <name>GTP</name>
        <dbReference type="ChEBI" id="CHEBI:37565"/>
    </ligand>
</feature>
<feature type="binding site" evidence="2">
    <location>
        <begin position="38"/>
        <end position="44"/>
    </location>
    <ligand>
        <name>GTP</name>
        <dbReference type="ChEBI" id="CHEBI:37565"/>
    </ligand>
</feature>
<feature type="binding site" evidence="2">
    <location>
        <begin position="67"/>
        <end position="71"/>
    </location>
    <ligand>
        <name>GTP</name>
        <dbReference type="ChEBI" id="CHEBI:37565"/>
    </ligand>
</feature>
<feature type="binding site" evidence="2">
    <location>
        <begin position="125"/>
        <end position="128"/>
    </location>
    <ligand>
        <name>GTP</name>
        <dbReference type="ChEBI" id="CHEBI:37565"/>
    </ligand>
</feature>
<feature type="binding site" evidence="2">
    <location>
        <begin position="155"/>
        <end position="157"/>
    </location>
    <ligand>
        <name>GTP</name>
        <dbReference type="ChEBI" id="CHEBI:37565"/>
    </ligand>
</feature>
<feature type="lipid moiety-binding region" description="S-geranylgeranyl cysteine" evidence="1">
    <location>
        <position position="213"/>
    </location>
</feature>
<feature type="lipid moiety-binding region" description="S-geranylgeranyl cysteine" evidence="1">
    <location>
        <position position="214"/>
    </location>
</feature>